<proteinExistence type="evidence at transcript level"/>
<reference key="1">
    <citation type="journal article" date="1999" name="Nature">
        <title>Sequence and analysis of chromosome 2 of the plant Arabidopsis thaliana.</title>
        <authorList>
            <person name="Lin X."/>
            <person name="Kaul S."/>
            <person name="Rounsley S.D."/>
            <person name="Shea T.P."/>
            <person name="Benito M.-I."/>
            <person name="Town C.D."/>
            <person name="Fujii C.Y."/>
            <person name="Mason T.M."/>
            <person name="Bowman C.L."/>
            <person name="Barnstead M.E."/>
            <person name="Feldblyum T.V."/>
            <person name="Buell C.R."/>
            <person name="Ketchum K.A."/>
            <person name="Lee J.J."/>
            <person name="Ronning C.M."/>
            <person name="Koo H.L."/>
            <person name="Moffat K.S."/>
            <person name="Cronin L.A."/>
            <person name="Shen M."/>
            <person name="Pai G."/>
            <person name="Van Aken S."/>
            <person name="Umayam L."/>
            <person name="Tallon L.J."/>
            <person name="Gill J.E."/>
            <person name="Adams M.D."/>
            <person name="Carrera A.J."/>
            <person name="Creasy T.H."/>
            <person name="Goodman H.M."/>
            <person name="Somerville C.R."/>
            <person name="Copenhaver G.P."/>
            <person name="Preuss D."/>
            <person name="Nierman W.C."/>
            <person name="White O."/>
            <person name="Eisen J.A."/>
            <person name="Salzberg S.L."/>
            <person name="Fraser C.M."/>
            <person name="Venter J.C."/>
        </authorList>
    </citation>
    <scope>NUCLEOTIDE SEQUENCE [LARGE SCALE GENOMIC DNA]</scope>
    <source>
        <strain>cv. Columbia</strain>
    </source>
</reference>
<reference key="2">
    <citation type="journal article" date="2017" name="Plant J.">
        <title>Araport11: a complete reannotation of the Arabidopsis thaliana reference genome.</title>
        <authorList>
            <person name="Cheng C.Y."/>
            <person name="Krishnakumar V."/>
            <person name="Chan A.P."/>
            <person name="Thibaud-Nissen F."/>
            <person name="Schobel S."/>
            <person name="Town C.D."/>
        </authorList>
    </citation>
    <scope>GENOME REANNOTATION</scope>
    <source>
        <strain>cv. Columbia</strain>
    </source>
</reference>
<reference key="3">
    <citation type="submission" date="2002-03" db="EMBL/GenBank/DDBJ databases">
        <title>Full-length cDNA from Arabidopsis thaliana.</title>
        <authorList>
            <person name="Brover V.V."/>
            <person name="Troukhan M.E."/>
            <person name="Alexandrov N.A."/>
            <person name="Lu Y.-P."/>
            <person name="Flavell R.B."/>
            <person name="Feldmann K.A."/>
        </authorList>
    </citation>
    <scope>NUCLEOTIDE SEQUENCE [LARGE SCALE MRNA] (ISOFORM 1)</scope>
</reference>
<reference key="4">
    <citation type="journal article" date="2012" name="Genes Dev.">
        <title>PRORP proteins support RNase P activity in both organelles and the nucleus in Arabidopsis.</title>
        <authorList>
            <person name="Gutmann B."/>
            <person name="Gobert A."/>
            <person name="Giege P."/>
        </authorList>
    </citation>
    <scope>FUNCTION</scope>
    <scope>DISRUPTION PHENOTYPE</scope>
</reference>
<sequence>MGTETVVHDQARWAMAAMERRLAVAKAQLLQQQQQKNEKDKKGTSDVDVSMKESHQADSLPTPSKTSIKKVDPKDDDSVAYTKLSHPVDENLLATNVKFSSAKGTIVDKVLHNLLRSGDSAQKYLQGTKSVKLDNYILLDNFVQSRSSASGSKKASQKDSKRSKSRMSMKRLKKSGALHIPKDLQKFDLFKPMHGMWESYMMKLIKVTGKIQLSLTLLSADLHGAFMFVAECKIASFTGVQGIMVRETSETFGIITRDDKFRVVPKKLSVFIIQLDCWKITLHGDKFISRDNIVQR</sequence>
<comment type="function">
    <text evidence="5">Component of the MRP ribonuclease complex, which cleaves pre-rRNA sequences (PubMed:22549728). Required for rRNA maturation, including 5.8S rRNA processing (PubMed:22549728). Seems not involved in tRNA maturation (PubMed:22549728).</text>
</comment>
<comment type="subunit">
    <text evidence="1 2">Component of nuclear RNase MRP complexes (By similarity). Several subunits of RNase P are also part of the RNase MRP complex (By similarity). RNase MRP consists of a catalytic RNA moiety and several protein subunits (By similarity).</text>
</comment>
<comment type="subcellular location">
    <subcellularLocation>
        <location evidence="3">Nucleus</location>
    </subcellularLocation>
</comment>
<comment type="alternative products">
    <event type="alternative splicing"/>
    <isoform>
        <id>Q9ZW76-1</id>
        <name>1</name>
        <sequence type="displayed"/>
    </isoform>
    <isoform>
        <id>Q9ZW76-2</id>
        <name evidence="10 11">2</name>
        <sequence type="described" ref="VSP_061007"/>
    </isoform>
</comment>
<comment type="disruption phenotype">
    <text evidence="5">Accumulation of unprocessed cytosolic rRNA precursors, especially the large 35S rRNA precursor, as well as of the internal transcribed spacer 1 (ITS1) fragment corresponding to the region between the 18S and 5.8S rRNAs that contains the A3 cleavage sites.</text>
</comment>
<comment type="similarity">
    <text evidence="7">Belongs to the eukaryotic/archaeal RNase P protein component 1 family.</text>
</comment>
<organism>
    <name type="scientific">Arabidopsis thaliana</name>
    <name type="common">Mouse-ear cress</name>
    <dbReference type="NCBI Taxonomy" id="3702"/>
    <lineage>
        <taxon>Eukaryota</taxon>
        <taxon>Viridiplantae</taxon>
        <taxon>Streptophyta</taxon>
        <taxon>Embryophyta</taxon>
        <taxon>Tracheophyta</taxon>
        <taxon>Spermatophyta</taxon>
        <taxon>Magnoliopsida</taxon>
        <taxon>eudicotyledons</taxon>
        <taxon>Gunneridae</taxon>
        <taxon>Pentapetalae</taxon>
        <taxon>rosids</taxon>
        <taxon>malvids</taxon>
        <taxon>Brassicales</taxon>
        <taxon>Brassicaceae</taxon>
        <taxon>Camelineae</taxon>
        <taxon>Arabidopsis</taxon>
    </lineage>
</organism>
<feature type="chain" id="PRO_0000452459" description="Ribonuclease MRP protein subunit POP4">
    <location>
        <begin position="1"/>
        <end position="296"/>
    </location>
</feature>
<feature type="region of interest" description="Disordered" evidence="4">
    <location>
        <begin position="29"/>
        <end position="74"/>
    </location>
</feature>
<feature type="region of interest" description="Disordered" evidence="4">
    <location>
        <begin position="148"/>
        <end position="173"/>
    </location>
</feature>
<feature type="short sequence motif" description="Nuclear localization signal" evidence="3">
    <location>
        <begin position="160"/>
        <end position="167"/>
    </location>
</feature>
<feature type="compositionally biased region" description="Basic and acidic residues" evidence="4">
    <location>
        <begin position="36"/>
        <end position="56"/>
    </location>
</feature>
<feature type="compositionally biased region" description="Polar residues" evidence="4">
    <location>
        <begin position="57"/>
        <end position="66"/>
    </location>
</feature>
<feature type="compositionally biased region" description="Basic residues" evidence="4">
    <location>
        <begin position="163"/>
        <end position="173"/>
    </location>
</feature>
<feature type="splice variant" id="VSP_061007" description="In isoform 2.">
    <location>
        <position position="71"/>
    </location>
</feature>
<evidence type="ECO:0000250" key="1">
    <source>
        <dbReference type="UniProtKB" id="P38336"/>
    </source>
</evidence>
<evidence type="ECO:0000250" key="2">
    <source>
        <dbReference type="UniProtKB" id="Q99575"/>
    </source>
</evidence>
<evidence type="ECO:0000255" key="3">
    <source>
        <dbReference type="PROSITE-ProRule" id="PRU00768"/>
    </source>
</evidence>
<evidence type="ECO:0000256" key="4">
    <source>
        <dbReference type="SAM" id="MobiDB-lite"/>
    </source>
</evidence>
<evidence type="ECO:0000269" key="5">
    <source>
    </source>
</evidence>
<evidence type="ECO:0000303" key="6">
    <source>
    </source>
</evidence>
<evidence type="ECO:0000305" key="7"/>
<evidence type="ECO:0000312" key="8">
    <source>
        <dbReference type="Araport" id="AT2G43190"/>
    </source>
</evidence>
<evidence type="ECO:0000312" key="9">
    <source>
        <dbReference type="EMBL" id="AAC64308.2"/>
    </source>
</evidence>
<evidence type="ECO:0000312" key="10">
    <source>
        <dbReference type="EMBL" id="AEC10225.1"/>
    </source>
</evidence>
<evidence type="ECO:0000312" key="11">
    <source>
        <dbReference type="EMBL" id="AEC10226.1"/>
    </source>
</evidence>
<keyword id="KW-0025">Alternative splicing</keyword>
<keyword id="KW-0539">Nucleus</keyword>
<keyword id="KW-1185">Reference proteome</keyword>
<keyword id="KW-0698">rRNA processing</keyword>
<dbReference type="EMBL" id="AC004450">
    <property type="protein sequence ID" value="AAC64308.2"/>
    <property type="molecule type" value="Genomic_DNA"/>
</dbReference>
<dbReference type="EMBL" id="CP002685">
    <property type="protein sequence ID" value="AEC10224.1"/>
    <property type="molecule type" value="Genomic_DNA"/>
</dbReference>
<dbReference type="EMBL" id="CP002685">
    <property type="protein sequence ID" value="AEC10225.1"/>
    <property type="molecule type" value="Genomic_DNA"/>
</dbReference>
<dbReference type="EMBL" id="CP002685">
    <property type="protein sequence ID" value="AEC10226.1"/>
    <property type="molecule type" value="Genomic_DNA"/>
</dbReference>
<dbReference type="EMBL" id="CP002685">
    <property type="protein sequence ID" value="ANM62650.1"/>
    <property type="molecule type" value="Genomic_DNA"/>
</dbReference>
<dbReference type="EMBL" id="AY086048">
    <property type="protein sequence ID" value="AAM63258.1"/>
    <property type="molecule type" value="mRNA"/>
</dbReference>
<dbReference type="PIR" id="B84863">
    <property type="entry name" value="B84863"/>
</dbReference>
<dbReference type="RefSeq" id="NP_001324792.1">
    <molecule id="Q9ZW76-1"/>
    <property type="nucleotide sequence ID" value="NM_001337019.1"/>
</dbReference>
<dbReference type="RefSeq" id="NP_565993.1">
    <molecule id="Q9ZW76-1"/>
    <property type="nucleotide sequence ID" value="NM_129881.3"/>
</dbReference>
<dbReference type="RefSeq" id="NP_850389.1">
    <molecule id="Q9ZW76-2"/>
    <property type="nucleotide sequence ID" value="NM_180058.2"/>
</dbReference>
<dbReference type="RefSeq" id="NP_973678.1">
    <molecule id="Q9ZW76-2"/>
    <property type="nucleotide sequence ID" value="NM_201949.2"/>
</dbReference>
<dbReference type="SMR" id="Q9ZW76"/>
<dbReference type="FunCoup" id="Q9ZW76">
    <property type="interactions" value="231"/>
</dbReference>
<dbReference type="STRING" id="3702.Q9ZW76"/>
<dbReference type="GlyGen" id="Q9ZW76">
    <property type="glycosylation" value="1 site"/>
</dbReference>
<dbReference type="PaxDb" id="3702-AT2G43190.1"/>
<dbReference type="ProteomicsDB" id="183689"/>
<dbReference type="ProteomicsDB" id="189221"/>
<dbReference type="EnsemblPlants" id="AT2G43190.1">
    <molecule id="Q9ZW76-1"/>
    <property type="protein sequence ID" value="AT2G43190.1"/>
    <property type="gene ID" value="AT2G43190"/>
</dbReference>
<dbReference type="EnsemblPlants" id="AT2G43190.2">
    <molecule id="Q9ZW76-2"/>
    <property type="protein sequence ID" value="AT2G43190.2"/>
    <property type="gene ID" value="AT2G43190"/>
</dbReference>
<dbReference type="EnsemblPlants" id="AT2G43190.3">
    <molecule id="Q9ZW76-2"/>
    <property type="protein sequence ID" value="AT2G43190.3"/>
    <property type="gene ID" value="AT2G43190"/>
</dbReference>
<dbReference type="EnsemblPlants" id="AT2G43190.5">
    <molecule id="Q9ZW76-1"/>
    <property type="protein sequence ID" value="AT2G43190.5"/>
    <property type="gene ID" value="AT2G43190"/>
</dbReference>
<dbReference type="GeneID" id="818920"/>
<dbReference type="Gramene" id="AT2G43190.1">
    <molecule id="Q9ZW76-1"/>
    <property type="protein sequence ID" value="AT2G43190.1"/>
    <property type="gene ID" value="AT2G43190"/>
</dbReference>
<dbReference type="Gramene" id="AT2G43190.2">
    <molecule id="Q9ZW76-2"/>
    <property type="protein sequence ID" value="AT2G43190.2"/>
    <property type="gene ID" value="AT2G43190"/>
</dbReference>
<dbReference type="Gramene" id="AT2G43190.3">
    <molecule id="Q9ZW76-2"/>
    <property type="protein sequence ID" value="AT2G43190.3"/>
    <property type="gene ID" value="AT2G43190"/>
</dbReference>
<dbReference type="Gramene" id="AT2G43190.5">
    <molecule id="Q9ZW76-1"/>
    <property type="protein sequence ID" value="AT2G43190.5"/>
    <property type="gene ID" value="AT2G43190"/>
</dbReference>
<dbReference type="KEGG" id="ath:AT2G43190"/>
<dbReference type="Araport" id="AT2G43190"/>
<dbReference type="TAIR" id="AT2G43190">
    <property type="gene designation" value="POP4"/>
</dbReference>
<dbReference type="eggNOG" id="KOG4046">
    <property type="taxonomic scope" value="Eukaryota"/>
</dbReference>
<dbReference type="HOGENOM" id="CLU_049812_0_0_1"/>
<dbReference type="InParanoid" id="Q9ZW76"/>
<dbReference type="OMA" id="DKPRCQT"/>
<dbReference type="OrthoDB" id="124041at2759"/>
<dbReference type="PhylomeDB" id="Q9ZW76"/>
<dbReference type="PRO" id="PR:Q9ZW76"/>
<dbReference type="Proteomes" id="UP000006548">
    <property type="component" value="Chromosome 2"/>
</dbReference>
<dbReference type="ExpressionAtlas" id="Q9ZW76">
    <property type="expression patterns" value="baseline and differential"/>
</dbReference>
<dbReference type="GO" id="GO:0005634">
    <property type="term" value="C:nucleus"/>
    <property type="evidence" value="ECO:0007669"/>
    <property type="project" value="UniProtKB-SubCell"/>
</dbReference>
<dbReference type="GO" id="GO:0000172">
    <property type="term" value="C:ribonuclease MRP complex"/>
    <property type="evidence" value="ECO:0007669"/>
    <property type="project" value="InterPro"/>
</dbReference>
<dbReference type="GO" id="GO:0030677">
    <property type="term" value="C:ribonuclease P complex"/>
    <property type="evidence" value="ECO:0007669"/>
    <property type="project" value="InterPro"/>
</dbReference>
<dbReference type="GO" id="GO:0033204">
    <property type="term" value="F:ribonuclease P RNA binding"/>
    <property type="evidence" value="ECO:0007669"/>
    <property type="project" value="InterPro"/>
</dbReference>
<dbReference type="GO" id="GO:0006364">
    <property type="term" value="P:rRNA processing"/>
    <property type="evidence" value="ECO:0000315"/>
    <property type="project" value="TAIR"/>
</dbReference>
<dbReference type="FunFam" id="2.30.30.210:FF:000002">
    <property type="entry name" value="Ribonuclease P protein subunit p29"/>
    <property type="match status" value="1"/>
</dbReference>
<dbReference type="Gene3D" id="2.30.30.210">
    <property type="entry name" value="Ribonuclease P/MRP, subunit p29"/>
    <property type="match status" value="1"/>
</dbReference>
<dbReference type="InterPro" id="IPR016848">
    <property type="entry name" value="RNase_P/MRP_Rpp29-subunit"/>
</dbReference>
<dbReference type="InterPro" id="IPR036980">
    <property type="entry name" value="RNase_P/MRP_Rpp29_sf"/>
</dbReference>
<dbReference type="InterPro" id="IPR023534">
    <property type="entry name" value="Rof/RNase_P-like"/>
</dbReference>
<dbReference type="InterPro" id="IPR002730">
    <property type="entry name" value="Rpp29/RNP1"/>
</dbReference>
<dbReference type="PANTHER" id="PTHR13348:SF0">
    <property type="entry name" value="RIBONUCLEASE P PROTEIN SUBUNIT P29"/>
    <property type="match status" value="1"/>
</dbReference>
<dbReference type="PANTHER" id="PTHR13348">
    <property type="entry name" value="RIBONUCLEASE P SUBUNIT P29"/>
    <property type="match status" value="1"/>
</dbReference>
<dbReference type="Pfam" id="PF01868">
    <property type="entry name" value="RNase_P-MRP_p29"/>
    <property type="match status" value="1"/>
</dbReference>
<dbReference type="SMART" id="SM00538">
    <property type="entry name" value="POP4"/>
    <property type="match status" value="1"/>
</dbReference>
<dbReference type="SUPFAM" id="SSF101744">
    <property type="entry name" value="Rof/RNase P subunit-like"/>
    <property type="match status" value="1"/>
</dbReference>
<gene>
    <name evidence="6" type="primary">POP4</name>
    <name evidence="8" type="ordered locus">At2g43190</name>
    <name evidence="9" type="ORF">F14B2.13</name>
</gene>
<accession>Q9ZW76</accession>
<accession>A0A178W358</accession>
<accession>F4IQ79</accession>
<name>POP4_ARATH</name>
<protein>
    <recommendedName>
        <fullName evidence="6">Ribonuclease MRP protein subunit POP4</fullName>
        <shortName evidence="6">RNase MRP POP4</shortName>
    </recommendedName>
    <alternativeName>
        <fullName evidence="6">RNA-processing protein POP4</fullName>
    </alternativeName>
</protein>